<keyword id="KW-0067">ATP-binding</keyword>
<keyword id="KW-0175">Coiled coil</keyword>
<keyword id="KW-0479">Metal-binding</keyword>
<keyword id="KW-0547">Nucleotide-binding</keyword>
<keyword id="KW-1185">Reference proteome</keyword>
<keyword id="KW-0862">Zinc</keyword>
<proteinExistence type="inferred from homology"/>
<sequence length="1097" mass="121792">MTTTTTTTTRVASSSSTRNNRILKDANGDIGEHLRNHIHLTNCIHLKNNMHKQSPVLTDRALMRDLIVLQRSRSLRDPSASPPAWNTPPSVVDLLPKKGDLVEGGRRSVDLKKSSRRLSALSGSSPVVNFGTSKVTPSDERSGPVSGERDSGRRVKREESSRKSYRIGDDYQNVNEVVSHGSGSKASRRLSRVNDAMVKTLSDQLNEVVVGDSDDVVSSNVRPRVRYGGGGGGGNTRGCAGGMSRPKRRKFRGTRRVRGKSRDTGGGKSEMSVASNTLPQVEKHDGEKEGFGEQNMTKACGIPFNWSRIHHRGKTFLDKAGRSLSCGMSDSKGGRKGETNERNGSDKMMIQSDDDSSSFIGSDGEALPLLVDSGENDGWVHDYSGELGIFADSLLKNDEDSDLASEGRSGEKKHKKKSHVNARHRHRQQHQSLTEKYTPKTFRDLLGQNLVVQALSNAVARRKLGLLYVFHGPNGTGKTSCARIFARALNCHSMEQPKPCGTCSSCVSHDMGKSWNIREVGPVGNYDFEKIMDLLDGNVMVSSQSPRVFIFDDCDTLSSDCWNALSKVVDRAAPRHVVFILVCSSLDVLPHVIISRCQKFFFPKLKDADIVYSLQWIASKEEIEIDKDALKLIASRSDGSLRDAEMTLEQLSLLGQRISVPLVQELVGLVSDEKLVDLLDLALSADTVNTVKNLRTIMETSVEPLALMSQLATVITDILAGSYDFTKDQHKRKFFRRQPLPKEDMEKLRQALKTLSEAEKQLRVSNDKLTWLTAALLQLAPDQNYLLQRSSTADTGGRESSDHHLDPSSDAAGGRSSGLDRRRGDSRKNRPAVEEIWLEVIEKLRVNGLREFLYKEGRIVSLNLGSAPTVHLMFSSPLTKSTAEKFRSHIMQAFEAVLESPVTIEIRCETKKDPRNNVHHHHHHPTVKDKSLPQSLALIGHDYNIDGSGRSEIVEVTESNGQRRQQQKQQEEERTEPVGSSALARARRKHLEASQSQNQSQSIVRGKVSLAHVIQQADGCSLQNGWSKRKAVSIAEKLEQENLRLEPRSRSLLCWKSSRGTRRKATRLKVRTRRARPHTLLKLVSCGKCLSTRSPTR</sequence>
<feature type="chain" id="PRO_0000422979" description="Protein STICHEL-like 3">
    <location>
        <begin position="1"/>
        <end position="1097"/>
    </location>
</feature>
<feature type="region of interest" description="Disordered" evidence="3">
    <location>
        <begin position="1"/>
        <end position="22"/>
    </location>
</feature>
<feature type="region of interest" description="Disordered" evidence="3">
    <location>
        <begin position="74"/>
        <end position="168"/>
    </location>
</feature>
<feature type="region of interest" description="Disordered" evidence="3">
    <location>
        <begin position="220"/>
        <end position="293"/>
    </location>
</feature>
<feature type="region of interest" description="Disordered" evidence="3">
    <location>
        <begin position="321"/>
        <end position="358"/>
    </location>
</feature>
<feature type="region of interest" description="Disordered" evidence="3">
    <location>
        <begin position="400"/>
        <end position="436"/>
    </location>
</feature>
<feature type="region of interest" description="Disordered" evidence="3">
    <location>
        <begin position="790"/>
        <end position="828"/>
    </location>
</feature>
<feature type="region of interest" description="Disordered" evidence="3">
    <location>
        <begin position="913"/>
        <end position="932"/>
    </location>
</feature>
<feature type="region of interest" description="Disordered" evidence="3">
    <location>
        <begin position="956"/>
        <end position="1003"/>
    </location>
</feature>
<feature type="coiled-coil region" evidence="2">
    <location>
        <begin position="742"/>
        <end position="770"/>
    </location>
</feature>
<feature type="compositionally biased region" description="Polar residues" evidence="3">
    <location>
        <begin position="10"/>
        <end position="20"/>
    </location>
</feature>
<feature type="compositionally biased region" description="Basic and acidic residues" evidence="3">
    <location>
        <begin position="95"/>
        <end position="113"/>
    </location>
</feature>
<feature type="compositionally biased region" description="Polar residues" evidence="3">
    <location>
        <begin position="126"/>
        <end position="136"/>
    </location>
</feature>
<feature type="compositionally biased region" description="Basic and acidic residues" evidence="3">
    <location>
        <begin position="137"/>
        <end position="168"/>
    </location>
</feature>
<feature type="compositionally biased region" description="Gly residues" evidence="3">
    <location>
        <begin position="227"/>
        <end position="241"/>
    </location>
</feature>
<feature type="compositionally biased region" description="Basic residues" evidence="3">
    <location>
        <begin position="245"/>
        <end position="259"/>
    </location>
</feature>
<feature type="compositionally biased region" description="Basic and acidic residues" evidence="3">
    <location>
        <begin position="281"/>
        <end position="291"/>
    </location>
</feature>
<feature type="compositionally biased region" description="Basic and acidic residues" evidence="3">
    <location>
        <begin position="332"/>
        <end position="345"/>
    </location>
</feature>
<feature type="compositionally biased region" description="Low complexity" evidence="3">
    <location>
        <begin position="346"/>
        <end position="358"/>
    </location>
</feature>
<feature type="compositionally biased region" description="Basic residues" evidence="3">
    <location>
        <begin position="411"/>
        <end position="429"/>
    </location>
</feature>
<feature type="compositionally biased region" description="Basic and acidic residues" evidence="3">
    <location>
        <begin position="796"/>
        <end position="807"/>
    </location>
</feature>
<feature type="compositionally biased region" description="Basic and acidic residues" evidence="3">
    <location>
        <begin position="818"/>
        <end position="828"/>
    </location>
</feature>
<feature type="compositionally biased region" description="Polar residues" evidence="3">
    <location>
        <begin position="993"/>
        <end position="1003"/>
    </location>
</feature>
<feature type="binding site" evidence="2">
    <location>
        <begin position="472"/>
        <end position="479"/>
    </location>
    <ligand>
        <name>ATP</name>
        <dbReference type="ChEBI" id="CHEBI:30616"/>
    </ligand>
</feature>
<feature type="binding site" evidence="1">
    <location>
        <position position="491"/>
    </location>
    <ligand>
        <name>Zn(2+)</name>
        <dbReference type="ChEBI" id="CHEBI:29105"/>
    </ligand>
</feature>
<feature type="binding site" evidence="1">
    <location>
        <position position="500"/>
    </location>
    <ligand>
        <name>Zn(2+)</name>
        <dbReference type="ChEBI" id="CHEBI:29105"/>
    </ligand>
</feature>
<feature type="binding site" evidence="1">
    <location>
        <position position="503"/>
    </location>
    <ligand>
        <name>Zn(2+)</name>
        <dbReference type="ChEBI" id="CHEBI:29105"/>
    </ligand>
</feature>
<feature type="binding site" evidence="1">
    <location>
        <position position="506"/>
    </location>
    <ligand>
        <name>Zn(2+)</name>
        <dbReference type="ChEBI" id="CHEBI:29105"/>
    </ligand>
</feature>
<organism>
    <name type="scientific">Arabidopsis thaliana</name>
    <name type="common">Mouse-ear cress</name>
    <dbReference type="NCBI Taxonomy" id="3702"/>
    <lineage>
        <taxon>Eukaryota</taxon>
        <taxon>Viridiplantae</taxon>
        <taxon>Streptophyta</taxon>
        <taxon>Embryophyta</taxon>
        <taxon>Tracheophyta</taxon>
        <taxon>Spermatophyta</taxon>
        <taxon>Magnoliopsida</taxon>
        <taxon>eudicotyledons</taxon>
        <taxon>Gunneridae</taxon>
        <taxon>Pentapetalae</taxon>
        <taxon>rosids</taxon>
        <taxon>malvids</taxon>
        <taxon>Brassicales</taxon>
        <taxon>Brassicaceae</taxon>
        <taxon>Camelineae</taxon>
        <taxon>Arabidopsis</taxon>
    </lineage>
</organism>
<accession>F4JRP0</accession>
<accession>Q9SN33</accession>
<gene>
    <name type="ordered locus">At4g18820</name>
    <name type="ORF">F28A21.230</name>
</gene>
<name>STIL3_ARATH</name>
<comment type="similarity">
    <text evidence="4">Belongs to the DnaX/STICHEL family.</text>
</comment>
<comment type="sequence caution" evidence="4">
    <conflict type="erroneous gene model prediction">
        <sequence resource="EMBL-CDS" id="CAB37467"/>
    </conflict>
</comment>
<comment type="sequence caution" evidence="4">
    <conflict type="erroneous gene model prediction">
        <sequence resource="EMBL-CDS" id="CAB78884"/>
    </conflict>
</comment>
<dbReference type="EMBL" id="AL035526">
    <property type="protein sequence ID" value="CAB37467.1"/>
    <property type="status" value="ALT_SEQ"/>
    <property type="molecule type" value="Genomic_DNA"/>
</dbReference>
<dbReference type="EMBL" id="AL161549">
    <property type="protein sequence ID" value="CAB78884.1"/>
    <property type="status" value="ALT_SEQ"/>
    <property type="molecule type" value="Genomic_DNA"/>
</dbReference>
<dbReference type="EMBL" id="CP002687">
    <property type="protein sequence ID" value="AEE84094.1"/>
    <property type="molecule type" value="Genomic_DNA"/>
</dbReference>
<dbReference type="PIR" id="T04874">
    <property type="entry name" value="T04874"/>
</dbReference>
<dbReference type="RefSeq" id="NP_193617.3">
    <property type="nucleotide sequence ID" value="NM_117998.4"/>
</dbReference>
<dbReference type="SMR" id="F4JRP0"/>
<dbReference type="BioGRID" id="12909">
    <property type="interactions" value="1"/>
</dbReference>
<dbReference type="FunCoup" id="F4JRP0">
    <property type="interactions" value="2062"/>
</dbReference>
<dbReference type="STRING" id="3702.F4JRP0"/>
<dbReference type="iPTMnet" id="F4JRP0"/>
<dbReference type="PaxDb" id="3702-AT4G18820.1"/>
<dbReference type="ProteomicsDB" id="228348"/>
<dbReference type="EnsemblPlants" id="AT4G18820.1">
    <property type="protein sequence ID" value="AT4G18820.1"/>
    <property type="gene ID" value="AT4G18820"/>
</dbReference>
<dbReference type="GeneID" id="827616"/>
<dbReference type="Gramene" id="AT4G18820.1">
    <property type="protein sequence ID" value="AT4G18820.1"/>
    <property type="gene ID" value="AT4G18820"/>
</dbReference>
<dbReference type="KEGG" id="ath:AT4G18820"/>
<dbReference type="Araport" id="AT4G18820"/>
<dbReference type="TAIR" id="AT4G18820"/>
<dbReference type="eggNOG" id="KOG0989">
    <property type="taxonomic scope" value="Eukaryota"/>
</dbReference>
<dbReference type="HOGENOM" id="CLU_010603_0_0_1"/>
<dbReference type="InParanoid" id="F4JRP0"/>
<dbReference type="OMA" id="FGEQNMT"/>
<dbReference type="PRO" id="PR:F4JRP0"/>
<dbReference type="Proteomes" id="UP000006548">
    <property type="component" value="Chromosome 4"/>
</dbReference>
<dbReference type="ExpressionAtlas" id="F4JRP0">
    <property type="expression patterns" value="baseline and differential"/>
</dbReference>
<dbReference type="GO" id="GO:0009360">
    <property type="term" value="C:DNA polymerase III complex"/>
    <property type="evidence" value="ECO:0007669"/>
    <property type="project" value="InterPro"/>
</dbReference>
<dbReference type="GO" id="GO:0005524">
    <property type="term" value="F:ATP binding"/>
    <property type="evidence" value="ECO:0007669"/>
    <property type="project" value="UniProtKB-KW"/>
</dbReference>
<dbReference type="GO" id="GO:0016887">
    <property type="term" value="F:ATP hydrolysis activity"/>
    <property type="evidence" value="ECO:0007669"/>
    <property type="project" value="InterPro"/>
</dbReference>
<dbReference type="GO" id="GO:0003677">
    <property type="term" value="F:DNA binding"/>
    <property type="evidence" value="ECO:0007669"/>
    <property type="project" value="InterPro"/>
</dbReference>
<dbReference type="GO" id="GO:0003887">
    <property type="term" value="F:DNA-directed DNA polymerase activity"/>
    <property type="evidence" value="ECO:0007669"/>
    <property type="project" value="InterPro"/>
</dbReference>
<dbReference type="GO" id="GO:0046872">
    <property type="term" value="F:metal ion binding"/>
    <property type="evidence" value="ECO:0007669"/>
    <property type="project" value="UniProtKB-KW"/>
</dbReference>
<dbReference type="GO" id="GO:0006260">
    <property type="term" value="P:DNA replication"/>
    <property type="evidence" value="ECO:0007669"/>
    <property type="project" value="InterPro"/>
</dbReference>
<dbReference type="CDD" id="cd18137">
    <property type="entry name" value="HLD_clamp_pol_III_gamma_tau"/>
    <property type="match status" value="1"/>
</dbReference>
<dbReference type="FunFam" id="1.10.8.60:FF:000013">
    <property type="entry name" value="DNA polymerase III subunit gamma/tau"/>
    <property type="match status" value="1"/>
</dbReference>
<dbReference type="Gene3D" id="1.10.8.60">
    <property type="match status" value="1"/>
</dbReference>
<dbReference type="Gene3D" id="3.40.50.300">
    <property type="entry name" value="P-loop containing nucleotide triphosphate hydrolases"/>
    <property type="match status" value="1"/>
</dbReference>
<dbReference type="InterPro" id="IPR003593">
    <property type="entry name" value="AAA+_ATPase"/>
</dbReference>
<dbReference type="InterPro" id="IPR008921">
    <property type="entry name" value="DNA_pol3_clamp-load_cplx_C"/>
</dbReference>
<dbReference type="InterPro" id="IPR012763">
    <property type="entry name" value="DNA_pol_III_sug/sutau_N"/>
</dbReference>
<dbReference type="InterPro" id="IPR050238">
    <property type="entry name" value="DNA_Rep/Repair_Clamp_Loader"/>
</dbReference>
<dbReference type="InterPro" id="IPR054506">
    <property type="entry name" value="DnaA_N-like_STI"/>
</dbReference>
<dbReference type="InterPro" id="IPR045085">
    <property type="entry name" value="HLD_clamp_pol_III_gamma_tau"/>
</dbReference>
<dbReference type="InterPro" id="IPR027417">
    <property type="entry name" value="P-loop_NTPase"/>
</dbReference>
<dbReference type="NCBIfam" id="TIGR02397">
    <property type="entry name" value="dnaX_nterm"/>
    <property type="match status" value="1"/>
</dbReference>
<dbReference type="PANTHER" id="PTHR11669:SF46">
    <property type="entry name" value="PROTEIN STICHEL-LIKE 3"/>
    <property type="match status" value="1"/>
</dbReference>
<dbReference type="PANTHER" id="PTHR11669">
    <property type="entry name" value="REPLICATION FACTOR C / DNA POLYMERASE III GAMMA-TAU SUBUNIT"/>
    <property type="match status" value="1"/>
</dbReference>
<dbReference type="Pfam" id="PF13177">
    <property type="entry name" value="DNA_pol3_delta2"/>
    <property type="match status" value="1"/>
</dbReference>
<dbReference type="Pfam" id="PF23007">
    <property type="entry name" value="DnaA_N-like_STI"/>
    <property type="match status" value="1"/>
</dbReference>
<dbReference type="Pfam" id="PF22608">
    <property type="entry name" value="DNAX_ATPase_lid"/>
    <property type="match status" value="1"/>
</dbReference>
<dbReference type="SMART" id="SM00382">
    <property type="entry name" value="AAA"/>
    <property type="match status" value="1"/>
</dbReference>
<dbReference type="SUPFAM" id="SSF52540">
    <property type="entry name" value="P-loop containing nucleoside triphosphate hydrolases"/>
    <property type="match status" value="1"/>
</dbReference>
<dbReference type="SUPFAM" id="SSF48019">
    <property type="entry name" value="post-AAA+ oligomerization domain-like"/>
    <property type="match status" value="1"/>
</dbReference>
<reference key="1">
    <citation type="journal article" date="1999" name="Nature">
        <title>Sequence and analysis of chromosome 4 of the plant Arabidopsis thaliana.</title>
        <authorList>
            <person name="Mayer K.F.X."/>
            <person name="Schueller C."/>
            <person name="Wambutt R."/>
            <person name="Murphy G."/>
            <person name="Volckaert G."/>
            <person name="Pohl T."/>
            <person name="Duesterhoeft A."/>
            <person name="Stiekema W."/>
            <person name="Entian K.-D."/>
            <person name="Terryn N."/>
            <person name="Harris B."/>
            <person name="Ansorge W."/>
            <person name="Brandt P."/>
            <person name="Grivell L.A."/>
            <person name="Rieger M."/>
            <person name="Weichselgartner M."/>
            <person name="de Simone V."/>
            <person name="Obermaier B."/>
            <person name="Mache R."/>
            <person name="Mueller M."/>
            <person name="Kreis M."/>
            <person name="Delseny M."/>
            <person name="Puigdomenech P."/>
            <person name="Watson M."/>
            <person name="Schmidtheini T."/>
            <person name="Reichert B."/>
            <person name="Portetelle D."/>
            <person name="Perez-Alonso M."/>
            <person name="Boutry M."/>
            <person name="Bancroft I."/>
            <person name="Vos P."/>
            <person name="Hoheisel J."/>
            <person name="Zimmermann W."/>
            <person name="Wedler H."/>
            <person name="Ridley P."/>
            <person name="Langham S.-A."/>
            <person name="McCullagh B."/>
            <person name="Bilham L."/>
            <person name="Robben J."/>
            <person name="van der Schueren J."/>
            <person name="Grymonprez B."/>
            <person name="Chuang Y.-J."/>
            <person name="Vandenbussche F."/>
            <person name="Braeken M."/>
            <person name="Weltjens I."/>
            <person name="Voet M."/>
            <person name="Bastiaens I."/>
            <person name="Aert R."/>
            <person name="Defoor E."/>
            <person name="Weitzenegger T."/>
            <person name="Bothe G."/>
            <person name="Ramsperger U."/>
            <person name="Hilbert H."/>
            <person name="Braun M."/>
            <person name="Holzer E."/>
            <person name="Brandt A."/>
            <person name="Peters S."/>
            <person name="van Staveren M."/>
            <person name="Dirkse W."/>
            <person name="Mooijman P."/>
            <person name="Klein Lankhorst R."/>
            <person name="Rose M."/>
            <person name="Hauf J."/>
            <person name="Koetter P."/>
            <person name="Berneiser S."/>
            <person name="Hempel S."/>
            <person name="Feldpausch M."/>
            <person name="Lamberth S."/>
            <person name="Van den Daele H."/>
            <person name="De Keyser A."/>
            <person name="Buysshaert C."/>
            <person name="Gielen J."/>
            <person name="Villarroel R."/>
            <person name="De Clercq R."/>
            <person name="van Montagu M."/>
            <person name="Rogers J."/>
            <person name="Cronin A."/>
            <person name="Quail M.A."/>
            <person name="Bray-Allen S."/>
            <person name="Clark L."/>
            <person name="Doggett J."/>
            <person name="Hall S."/>
            <person name="Kay M."/>
            <person name="Lennard N."/>
            <person name="McLay K."/>
            <person name="Mayes R."/>
            <person name="Pettett A."/>
            <person name="Rajandream M.A."/>
            <person name="Lyne M."/>
            <person name="Benes V."/>
            <person name="Rechmann S."/>
            <person name="Borkova D."/>
            <person name="Bloecker H."/>
            <person name="Scharfe M."/>
            <person name="Grimm M."/>
            <person name="Loehnert T.-H."/>
            <person name="Dose S."/>
            <person name="de Haan M."/>
            <person name="Maarse A.C."/>
            <person name="Schaefer M."/>
            <person name="Mueller-Auer S."/>
            <person name="Gabel C."/>
            <person name="Fuchs M."/>
            <person name="Fartmann B."/>
            <person name="Granderath K."/>
            <person name="Dauner D."/>
            <person name="Herzl A."/>
            <person name="Neumann S."/>
            <person name="Argiriou A."/>
            <person name="Vitale D."/>
            <person name="Liguori R."/>
            <person name="Piravandi E."/>
            <person name="Massenet O."/>
            <person name="Quigley F."/>
            <person name="Clabauld G."/>
            <person name="Muendlein A."/>
            <person name="Felber R."/>
            <person name="Schnabl S."/>
            <person name="Hiller R."/>
            <person name="Schmidt W."/>
            <person name="Lecharny A."/>
            <person name="Aubourg S."/>
            <person name="Chefdor F."/>
            <person name="Cooke R."/>
            <person name="Berger C."/>
            <person name="Monfort A."/>
            <person name="Casacuberta E."/>
            <person name="Gibbons T."/>
            <person name="Weber N."/>
            <person name="Vandenbol M."/>
            <person name="Bargues M."/>
            <person name="Terol J."/>
            <person name="Torres A."/>
            <person name="Perez-Perez A."/>
            <person name="Purnelle B."/>
            <person name="Bent E."/>
            <person name="Johnson S."/>
            <person name="Tacon D."/>
            <person name="Jesse T."/>
            <person name="Heijnen L."/>
            <person name="Schwarz S."/>
            <person name="Scholler P."/>
            <person name="Heber S."/>
            <person name="Francs P."/>
            <person name="Bielke C."/>
            <person name="Frishman D."/>
            <person name="Haase D."/>
            <person name="Lemcke K."/>
            <person name="Mewes H.-W."/>
            <person name="Stocker S."/>
            <person name="Zaccaria P."/>
            <person name="Bevan M."/>
            <person name="Wilson R.K."/>
            <person name="de la Bastide M."/>
            <person name="Habermann K."/>
            <person name="Parnell L."/>
            <person name="Dedhia N."/>
            <person name="Gnoj L."/>
            <person name="Schutz K."/>
            <person name="Huang E."/>
            <person name="Spiegel L."/>
            <person name="Sekhon M."/>
            <person name="Murray J."/>
            <person name="Sheet P."/>
            <person name="Cordes M."/>
            <person name="Abu-Threideh J."/>
            <person name="Stoneking T."/>
            <person name="Kalicki J."/>
            <person name="Graves T."/>
            <person name="Harmon G."/>
            <person name="Edwards J."/>
            <person name="Latreille P."/>
            <person name="Courtney L."/>
            <person name="Cloud J."/>
            <person name="Abbott A."/>
            <person name="Scott K."/>
            <person name="Johnson D."/>
            <person name="Minx P."/>
            <person name="Bentley D."/>
            <person name="Fulton B."/>
            <person name="Miller N."/>
            <person name="Greco T."/>
            <person name="Kemp K."/>
            <person name="Kramer J."/>
            <person name="Fulton L."/>
            <person name="Mardis E."/>
            <person name="Dante M."/>
            <person name="Pepin K."/>
            <person name="Hillier L.W."/>
            <person name="Nelson J."/>
            <person name="Spieth J."/>
            <person name="Ryan E."/>
            <person name="Andrews S."/>
            <person name="Geisel C."/>
            <person name="Layman D."/>
            <person name="Du H."/>
            <person name="Ali J."/>
            <person name="Berghoff A."/>
            <person name="Jones K."/>
            <person name="Drone K."/>
            <person name="Cotton M."/>
            <person name="Joshu C."/>
            <person name="Antonoiu B."/>
            <person name="Zidanic M."/>
            <person name="Strong C."/>
            <person name="Sun H."/>
            <person name="Lamar B."/>
            <person name="Yordan C."/>
            <person name="Ma P."/>
            <person name="Zhong J."/>
            <person name="Preston R."/>
            <person name="Vil D."/>
            <person name="Shekher M."/>
            <person name="Matero A."/>
            <person name="Shah R."/>
            <person name="Swaby I.K."/>
            <person name="O'Shaughnessy A."/>
            <person name="Rodriguez M."/>
            <person name="Hoffman J."/>
            <person name="Till S."/>
            <person name="Granat S."/>
            <person name="Shohdy N."/>
            <person name="Hasegawa A."/>
            <person name="Hameed A."/>
            <person name="Lodhi M."/>
            <person name="Johnson A."/>
            <person name="Chen E."/>
            <person name="Marra M.A."/>
            <person name="Martienssen R."/>
            <person name="McCombie W.R."/>
        </authorList>
    </citation>
    <scope>NUCLEOTIDE SEQUENCE [LARGE SCALE GENOMIC DNA]</scope>
    <source>
        <strain>cv. Columbia</strain>
    </source>
</reference>
<reference key="2">
    <citation type="journal article" date="2017" name="Plant J.">
        <title>Araport11: a complete reannotation of the Arabidopsis thaliana reference genome.</title>
        <authorList>
            <person name="Cheng C.Y."/>
            <person name="Krishnakumar V."/>
            <person name="Chan A.P."/>
            <person name="Thibaud-Nissen F."/>
            <person name="Schobel S."/>
            <person name="Town C.D."/>
        </authorList>
    </citation>
    <scope>GENOME REANNOTATION</scope>
    <source>
        <strain>cv. Columbia</strain>
    </source>
</reference>
<reference key="3">
    <citation type="journal article" date="2003" name="Plant Physiol.">
        <title>The Arabidopsis STICHEL gene is a regulator of trichome branch number and encodes a novel protein.</title>
        <authorList>
            <person name="Ilgenfritz H."/>
            <person name="Bouyer D."/>
            <person name="Schnittger A."/>
            <person name="Mathur J."/>
            <person name="Kirik V."/>
            <person name="Schwab B."/>
            <person name="Chua N.H."/>
            <person name="Juergens G."/>
            <person name="Huelskamp M."/>
        </authorList>
    </citation>
    <scope>GENE FAMILY</scope>
</reference>
<protein>
    <recommendedName>
        <fullName>Protein STICHEL-like 3</fullName>
    </recommendedName>
</protein>
<evidence type="ECO:0000250" key="1">
    <source>
        <dbReference type="UniProtKB" id="P06710"/>
    </source>
</evidence>
<evidence type="ECO:0000255" key="2"/>
<evidence type="ECO:0000256" key="3">
    <source>
        <dbReference type="SAM" id="MobiDB-lite"/>
    </source>
</evidence>
<evidence type="ECO:0000305" key="4"/>